<reference key="1">
    <citation type="journal article" date="2005" name="Genome Res.">
        <title>Living with two extremes: conclusions from the genome sequence of Natronomonas pharaonis.</title>
        <authorList>
            <person name="Falb M."/>
            <person name="Pfeiffer F."/>
            <person name="Palm P."/>
            <person name="Rodewald K."/>
            <person name="Hickmann V."/>
            <person name="Tittor J."/>
            <person name="Oesterhelt D."/>
        </authorList>
    </citation>
    <scope>NUCLEOTIDE SEQUENCE [LARGE SCALE GENOMIC DNA]</scope>
    <source>
        <strain>ATCC 35678 / DSM 2160 / CIP 103997 / JCM 8858 / NBRC 14720 / NCIMB 2260 / Gabara</strain>
    </source>
</reference>
<gene>
    <name evidence="1" type="primary">gcvH</name>
    <name type="ordered locus">NP_4772A</name>
</gene>
<evidence type="ECO:0000255" key="1">
    <source>
        <dbReference type="HAMAP-Rule" id="MF_00272"/>
    </source>
</evidence>
<evidence type="ECO:0000255" key="2">
    <source>
        <dbReference type="PROSITE-ProRule" id="PRU01066"/>
    </source>
</evidence>
<protein>
    <recommendedName>
        <fullName evidence="1">Probable glycine cleavage system H protein</fullName>
    </recommendedName>
</protein>
<proteinExistence type="inferred from homology"/>
<comment type="function">
    <text evidence="1">The glycine cleavage system catalyzes the degradation of glycine. The H protein shuttles the methylamine group of glycine from the P protein to the T protein.</text>
</comment>
<comment type="cofactor">
    <cofactor evidence="1">
        <name>(R)-lipoate</name>
        <dbReference type="ChEBI" id="CHEBI:83088"/>
    </cofactor>
    <text evidence="1">Binds 1 lipoyl cofactor covalently.</text>
</comment>
<comment type="subunit">
    <text evidence="1">The glycine cleavage system is composed of four proteins: P, T, L and H.</text>
</comment>
<comment type="similarity">
    <text evidence="1">Belongs to the GcvH family.</text>
</comment>
<feature type="chain" id="PRO_0000302472" description="Probable glycine cleavage system H protein">
    <location>
        <begin position="1"/>
        <end position="126"/>
    </location>
</feature>
<feature type="domain" description="Lipoyl-binding" evidence="2">
    <location>
        <begin position="24"/>
        <end position="106"/>
    </location>
</feature>
<feature type="modified residue" description="N6-lipoyllysine" evidence="1">
    <location>
        <position position="65"/>
    </location>
</feature>
<organism>
    <name type="scientific">Natronomonas pharaonis (strain ATCC 35678 / DSM 2160 / CIP 103997 / JCM 8858 / NBRC 14720 / NCIMB 2260 / Gabara)</name>
    <name type="common">Halobacterium pharaonis</name>
    <dbReference type="NCBI Taxonomy" id="348780"/>
    <lineage>
        <taxon>Archaea</taxon>
        <taxon>Methanobacteriati</taxon>
        <taxon>Methanobacteriota</taxon>
        <taxon>Stenosarchaea group</taxon>
        <taxon>Halobacteria</taxon>
        <taxon>Halobacteriales</taxon>
        <taxon>Haloarculaceae</taxon>
        <taxon>Natronomonas</taxon>
    </lineage>
</organism>
<accession>Q3IN29</accession>
<sequence length="126" mass="13919">MSFDVPADRRYLESHEWAQPDDDVVRVGITDFAQDELGDIVFVELPSVGDRIEHEAEFGVIESIKAVSDLYAPVSGEVVAVNDDLEDAPELVNDDPFGDGWLLEVEADGDDYESLLTADEYEAQIA</sequence>
<keyword id="KW-0450">Lipoyl</keyword>
<keyword id="KW-1185">Reference proteome</keyword>
<dbReference type="EMBL" id="CR936257">
    <property type="protein sequence ID" value="CAI50477.1"/>
    <property type="molecule type" value="Genomic_DNA"/>
</dbReference>
<dbReference type="RefSeq" id="WP_011324089.1">
    <property type="nucleotide sequence ID" value="NC_007426.1"/>
</dbReference>
<dbReference type="SMR" id="Q3IN29"/>
<dbReference type="STRING" id="348780.NP_4772A"/>
<dbReference type="EnsemblBacteria" id="CAI50477">
    <property type="protein sequence ID" value="CAI50477"/>
    <property type="gene ID" value="NP_4772A"/>
</dbReference>
<dbReference type="GeneID" id="3702743"/>
<dbReference type="KEGG" id="nph:NP_4772A"/>
<dbReference type="eggNOG" id="arCOG01303">
    <property type="taxonomic scope" value="Archaea"/>
</dbReference>
<dbReference type="HOGENOM" id="CLU_097408_2_0_2"/>
<dbReference type="OrthoDB" id="9810at2157"/>
<dbReference type="Proteomes" id="UP000002698">
    <property type="component" value="Chromosome"/>
</dbReference>
<dbReference type="GO" id="GO:0005737">
    <property type="term" value="C:cytoplasm"/>
    <property type="evidence" value="ECO:0007669"/>
    <property type="project" value="TreeGrafter"/>
</dbReference>
<dbReference type="GO" id="GO:0005960">
    <property type="term" value="C:glycine cleavage complex"/>
    <property type="evidence" value="ECO:0007669"/>
    <property type="project" value="InterPro"/>
</dbReference>
<dbReference type="GO" id="GO:0019464">
    <property type="term" value="P:glycine decarboxylation via glycine cleavage system"/>
    <property type="evidence" value="ECO:0007669"/>
    <property type="project" value="UniProtKB-UniRule"/>
</dbReference>
<dbReference type="CDD" id="cd06848">
    <property type="entry name" value="GCS_H"/>
    <property type="match status" value="1"/>
</dbReference>
<dbReference type="Gene3D" id="2.40.50.100">
    <property type="match status" value="1"/>
</dbReference>
<dbReference type="HAMAP" id="MF_00272">
    <property type="entry name" value="GcvH"/>
    <property type="match status" value="1"/>
</dbReference>
<dbReference type="InterPro" id="IPR003016">
    <property type="entry name" value="2-oxoA_DH_lipoyl-BS"/>
</dbReference>
<dbReference type="InterPro" id="IPR000089">
    <property type="entry name" value="Biotin_lipoyl"/>
</dbReference>
<dbReference type="InterPro" id="IPR002930">
    <property type="entry name" value="GCV_H"/>
</dbReference>
<dbReference type="InterPro" id="IPR033753">
    <property type="entry name" value="GCV_H/Fam206"/>
</dbReference>
<dbReference type="InterPro" id="IPR017453">
    <property type="entry name" value="GCV_H_sub"/>
</dbReference>
<dbReference type="InterPro" id="IPR011053">
    <property type="entry name" value="Single_hybrid_motif"/>
</dbReference>
<dbReference type="NCBIfam" id="TIGR00527">
    <property type="entry name" value="gcvH"/>
    <property type="match status" value="1"/>
</dbReference>
<dbReference type="NCBIfam" id="NF002270">
    <property type="entry name" value="PRK01202.1"/>
    <property type="match status" value="1"/>
</dbReference>
<dbReference type="PANTHER" id="PTHR11715">
    <property type="entry name" value="GLYCINE CLEAVAGE SYSTEM H PROTEIN"/>
    <property type="match status" value="1"/>
</dbReference>
<dbReference type="PANTHER" id="PTHR11715:SF3">
    <property type="entry name" value="GLYCINE CLEAVAGE SYSTEM H PROTEIN-RELATED"/>
    <property type="match status" value="1"/>
</dbReference>
<dbReference type="Pfam" id="PF01597">
    <property type="entry name" value="GCV_H"/>
    <property type="match status" value="1"/>
</dbReference>
<dbReference type="SUPFAM" id="SSF51230">
    <property type="entry name" value="Single hybrid motif"/>
    <property type="match status" value="1"/>
</dbReference>
<dbReference type="PROSITE" id="PS50968">
    <property type="entry name" value="BIOTINYL_LIPOYL"/>
    <property type="match status" value="1"/>
</dbReference>
<dbReference type="PROSITE" id="PS00189">
    <property type="entry name" value="LIPOYL"/>
    <property type="match status" value="1"/>
</dbReference>
<name>GCSH_NATPD</name>